<comment type="function">
    <text evidence="1">Probably functions as a manganese efflux pump.</text>
</comment>
<comment type="subcellular location">
    <subcellularLocation>
        <location evidence="1">Cell membrane</location>
        <topology evidence="1">Multi-pass membrane protein</topology>
    </subcellularLocation>
</comment>
<comment type="similarity">
    <text evidence="1">Belongs to the MntP (TC 9.B.29) family.</text>
</comment>
<protein>
    <recommendedName>
        <fullName evidence="1">Putative manganese efflux pump MntP</fullName>
    </recommendedName>
</protein>
<name>MNTP_PELTS</name>
<evidence type="ECO:0000255" key="1">
    <source>
        <dbReference type="HAMAP-Rule" id="MF_01521"/>
    </source>
</evidence>
<organism>
    <name type="scientific">Pelotomaculum thermopropionicum (strain DSM 13744 / JCM 10971 / SI)</name>
    <dbReference type="NCBI Taxonomy" id="370438"/>
    <lineage>
        <taxon>Bacteria</taxon>
        <taxon>Bacillati</taxon>
        <taxon>Bacillota</taxon>
        <taxon>Clostridia</taxon>
        <taxon>Eubacteriales</taxon>
        <taxon>Desulfotomaculaceae</taxon>
        <taxon>Pelotomaculum</taxon>
    </lineage>
</organism>
<accession>A5CYC0</accession>
<keyword id="KW-1003">Cell membrane</keyword>
<keyword id="KW-0406">Ion transport</keyword>
<keyword id="KW-0464">Manganese</keyword>
<keyword id="KW-0472">Membrane</keyword>
<keyword id="KW-1185">Reference proteome</keyword>
<keyword id="KW-0812">Transmembrane</keyword>
<keyword id="KW-1133">Transmembrane helix</keyword>
<keyword id="KW-0813">Transport</keyword>
<feature type="chain" id="PRO_1000087553" description="Putative manganese efflux pump MntP">
    <location>
        <begin position="1"/>
        <end position="180"/>
    </location>
</feature>
<feature type="transmembrane region" description="Helical" evidence="1">
    <location>
        <begin position="6"/>
        <end position="26"/>
    </location>
</feature>
<feature type="transmembrane region" description="Helical" evidence="1">
    <location>
        <begin position="34"/>
        <end position="54"/>
    </location>
</feature>
<feature type="transmembrane region" description="Helical" evidence="1">
    <location>
        <begin position="67"/>
        <end position="87"/>
    </location>
</feature>
<feature type="transmembrane region" description="Helical" evidence="1">
    <location>
        <begin position="102"/>
        <end position="122"/>
    </location>
</feature>
<feature type="transmembrane region" description="Helical" evidence="1">
    <location>
        <begin position="131"/>
        <end position="151"/>
    </location>
</feature>
<feature type="transmembrane region" description="Helical" evidence="1">
    <location>
        <begin position="160"/>
        <end position="180"/>
    </location>
</feature>
<reference key="1">
    <citation type="journal article" date="2008" name="Genome Res.">
        <title>The genome of Pelotomaculum thermopropionicum reveals niche-associated evolution in anaerobic microbiota.</title>
        <authorList>
            <person name="Kosaka T."/>
            <person name="Kato S."/>
            <person name="Shimoyama T."/>
            <person name="Ishii S."/>
            <person name="Abe T."/>
            <person name="Watanabe K."/>
        </authorList>
    </citation>
    <scope>NUCLEOTIDE SEQUENCE [LARGE SCALE GENOMIC DNA]</scope>
    <source>
        <strain>DSM 13744 / JCM 10971 / SI</strain>
    </source>
</reference>
<dbReference type="EMBL" id="AP009389">
    <property type="protein sequence ID" value="BAF61008.1"/>
    <property type="molecule type" value="Genomic_DNA"/>
</dbReference>
<dbReference type="STRING" id="370438.PTH_2827"/>
<dbReference type="KEGG" id="pth:PTH_2827"/>
<dbReference type="eggNOG" id="COG1971">
    <property type="taxonomic scope" value="Bacteria"/>
</dbReference>
<dbReference type="HOGENOM" id="CLU_096410_1_1_9"/>
<dbReference type="Proteomes" id="UP000006556">
    <property type="component" value="Chromosome"/>
</dbReference>
<dbReference type="GO" id="GO:0005886">
    <property type="term" value="C:plasma membrane"/>
    <property type="evidence" value="ECO:0007669"/>
    <property type="project" value="UniProtKB-SubCell"/>
</dbReference>
<dbReference type="GO" id="GO:0005384">
    <property type="term" value="F:manganese ion transmembrane transporter activity"/>
    <property type="evidence" value="ECO:0007669"/>
    <property type="project" value="UniProtKB-UniRule"/>
</dbReference>
<dbReference type="HAMAP" id="MF_01521">
    <property type="entry name" value="MntP_pump"/>
    <property type="match status" value="1"/>
</dbReference>
<dbReference type="InterPro" id="IPR003810">
    <property type="entry name" value="Mntp/YtaF"/>
</dbReference>
<dbReference type="InterPro" id="IPR022929">
    <property type="entry name" value="Put_MntP"/>
</dbReference>
<dbReference type="PANTHER" id="PTHR35529">
    <property type="entry name" value="MANGANESE EFFLUX PUMP MNTP-RELATED"/>
    <property type="match status" value="1"/>
</dbReference>
<dbReference type="PANTHER" id="PTHR35529:SF1">
    <property type="entry name" value="MANGANESE EFFLUX PUMP MNTP-RELATED"/>
    <property type="match status" value="1"/>
</dbReference>
<dbReference type="Pfam" id="PF02659">
    <property type="entry name" value="Mntp"/>
    <property type="match status" value="1"/>
</dbReference>
<sequence>MSFFTLMALAVALGTDALSLSVGIGLTGISRRRILQISATVLLFHIFMPLTGWLVGEFTGSLIGRAAAVIGSLLLVGLGVKMIWAAWRNGGETEPSLVRFNFWGLLLLGASVSMDALSAGFTLGTRQVNLLLAAGVIGLVAGAMTAGGLVFGRFLGSRVGERAQLLGGLILVGIGIKLFF</sequence>
<gene>
    <name evidence="1" type="primary">mntP</name>
    <name type="ordered locus">PTH_2827</name>
</gene>
<proteinExistence type="inferred from homology"/>